<accession>B2VL36</accession>
<evidence type="ECO:0000250" key="1"/>
<evidence type="ECO:0000255" key="2">
    <source>
        <dbReference type="HAMAP-Rule" id="MF_01109"/>
    </source>
</evidence>
<keyword id="KW-0028">Amino-acid biosynthesis</keyword>
<keyword id="KW-0055">Arginine biosynthesis</keyword>
<keyword id="KW-0963">Cytoplasm</keyword>
<keyword id="KW-1185">Reference proteome</keyword>
<keyword id="KW-0808">Transferase</keyword>
<gene>
    <name evidence="2" type="primary">argI</name>
    <name type="ordered locus">ETA_03640</name>
</gene>
<protein>
    <recommendedName>
        <fullName evidence="2">Ornithine carbamoyltransferase</fullName>
        <shortName evidence="2">OTCase</shortName>
        <ecNumber evidence="2">2.1.3.3</ecNumber>
    </recommendedName>
</protein>
<organism>
    <name type="scientific">Erwinia tasmaniensis (strain DSM 17950 / CFBP 7177 / CIP 109463 / NCPPB 4357 / Et1/99)</name>
    <dbReference type="NCBI Taxonomy" id="465817"/>
    <lineage>
        <taxon>Bacteria</taxon>
        <taxon>Pseudomonadati</taxon>
        <taxon>Pseudomonadota</taxon>
        <taxon>Gammaproteobacteria</taxon>
        <taxon>Enterobacterales</taxon>
        <taxon>Erwiniaceae</taxon>
        <taxon>Erwinia</taxon>
    </lineage>
</organism>
<sequence>MSQLYQRHFLRLLDFIPDEINGLLKLASRLKATKKKGDETQYLKGKNIALIFEKDSTRTRCSFEVAAFDQGANVTWLGPSGSQIGHKESIKDTARVLGRMYHAIQYRGHGQQLVESLAEHAGVPVWNGLTNEFHPTQLLADLLTMQEHLPEKTLNQMTLAYVGDTQNNMGNTLLEAAALVGLDLRLVAPKSCWPDPALVAQCRDVAQQTGGKITLTEDIAAGVQGADFIYTDVWVSMGEPKEVWHERITLLRPYQVNMALLQATGNPQVKFLHCLPAFHDDQTLLGQQMAQQYDLHGGMEVTDEVFESAHSVVFDQAENRLHTIKAVMVATLSQQE</sequence>
<reference key="1">
    <citation type="journal article" date="2008" name="Environ. Microbiol.">
        <title>The genome of Erwinia tasmaniensis strain Et1/99, a non-pathogenic bacterium in the genus Erwinia.</title>
        <authorList>
            <person name="Kube M."/>
            <person name="Migdoll A.M."/>
            <person name="Mueller I."/>
            <person name="Kuhl H."/>
            <person name="Beck A."/>
            <person name="Reinhardt R."/>
            <person name="Geider K."/>
        </authorList>
    </citation>
    <scope>NUCLEOTIDE SEQUENCE [LARGE SCALE GENOMIC DNA]</scope>
    <source>
        <strain>DSM 17950 / CFBP 7177 / CIP 109463 / NCPPB 4357 / Et1/99</strain>
    </source>
</reference>
<comment type="function">
    <text evidence="1">Reversibly catalyzes the transfer of the carbamoyl group from carbamoyl phosphate (CP) to the N(epsilon) atom of ornithine (ORN) to produce L-citrulline.</text>
</comment>
<comment type="catalytic activity">
    <reaction evidence="2">
        <text>carbamoyl phosphate + L-ornithine = L-citrulline + phosphate + H(+)</text>
        <dbReference type="Rhea" id="RHEA:19513"/>
        <dbReference type="ChEBI" id="CHEBI:15378"/>
        <dbReference type="ChEBI" id="CHEBI:43474"/>
        <dbReference type="ChEBI" id="CHEBI:46911"/>
        <dbReference type="ChEBI" id="CHEBI:57743"/>
        <dbReference type="ChEBI" id="CHEBI:58228"/>
        <dbReference type="EC" id="2.1.3.3"/>
    </reaction>
</comment>
<comment type="pathway">
    <text evidence="2">Amino-acid biosynthesis; L-arginine biosynthesis; L-arginine from L-ornithine and carbamoyl phosphate: step 1/3.</text>
</comment>
<comment type="subcellular location">
    <subcellularLocation>
        <location evidence="2">Cytoplasm</location>
    </subcellularLocation>
</comment>
<comment type="similarity">
    <text evidence="2">Belongs to the aspartate/ornithine carbamoyltransferase superfamily. OTCase family.</text>
</comment>
<dbReference type="EC" id="2.1.3.3" evidence="2"/>
<dbReference type="EMBL" id="CU468135">
    <property type="protein sequence ID" value="CAO95410.1"/>
    <property type="molecule type" value="Genomic_DNA"/>
</dbReference>
<dbReference type="RefSeq" id="WP_012440125.1">
    <property type="nucleotide sequence ID" value="NC_010694.1"/>
</dbReference>
<dbReference type="SMR" id="B2VL36"/>
<dbReference type="STRING" id="465817.ETA_03640"/>
<dbReference type="KEGG" id="eta:ETA_03640"/>
<dbReference type="eggNOG" id="COG0078">
    <property type="taxonomic scope" value="Bacteria"/>
</dbReference>
<dbReference type="HOGENOM" id="CLU_043846_3_1_6"/>
<dbReference type="OrthoDB" id="9802587at2"/>
<dbReference type="UniPathway" id="UPA00068">
    <property type="reaction ID" value="UER00112"/>
</dbReference>
<dbReference type="Proteomes" id="UP000001726">
    <property type="component" value="Chromosome"/>
</dbReference>
<dbReference type="GO" id="GO:0005737">
    <property type="term" value="C:cytoplasm"/>
    <property type="evidence" value="ECO:0007669"/>
    <property type="project" value="UniProtKB-SubCell"/>
</dbReference>
<dbReference type="GO" id="GO:0016597">
    <property type="term" value="F:amino acid binding"/>
    <property type="evidence" value="ECO:0007669"/>
    <property type="project" value="InterPro"/>
</dbReference>
<dbReference type="GO" id="GO:0004585">
    <property type="term" value="F:ornithine carbamoyltransferase activity"/>
    <property type="evidence" value="ECO:0007669"/>
    <property type="project" value="UniProtKB-UniRule"/>
</dbReference>
<dbReference type="GO" id="GO:0042450">
    <property type="term" value="P:arginine biosynthetic process via ornithine"/>
    <property type="evidence" value="ECO:0007669"/>
    <property type="project" value="TreeGrafter"/>
</dbReference>
<dbReference type="GO" id="GO:0019240">
    <property type="term" value="P:citrulline biosynthetic process"/>
    <property type="evidence" value="ECO:0007669"/>
    <property type="project" value="TreeGrafter"/>
</dbReference>
<dbReference type="GO" id="GO:0006526">
    <property type="term" value="P:L-arginine biosynthetic process"/>
    <property type="evidence" value="ECO:0007669"/>
    <property type="project" value="UniProtKB-UniRule"/>
</dbReference>
<dbReference type="FunFam" id="3.40.50.1370:FF:000004">
    <property type="entry name" value="Ornithine carbamoyltransferase"/>
    <property type="match status" value="1"/>
</dbReference>
<dbReference type="Gene3D" id="3.40.50.1370">
    <property type="entry name" value="Aspartate/ornithine carbamoyltransferase"/>
    <property type="match status" value="2"/>
</dbReference>
<dbReference type="HAMAP" id="MF_01109">
    <property type="entry name" value="OTCase"/>
    <property type="match status" value="1"/>
</dbReference>
<dbReference type="InterPro" id="IPR006132">
    <property type="entry name" value="Asp/Orn_carbamoyltranf_P-bd"/>
</dbReference>
<dbReference type="InterPro" id="IPR006130">
    <property type="entry name" value="Asp/Orn_carbamoylTrfase"/>
</dbReference>
<dbReference type="InterPro" id="IPR036901">
    <property type="entry name" value="Asp/Orn_carbamoylTrfase_sf"/>
</dbReference>
<dbReference type="InterPro" id="IPR006131">
    <property type="entry name" value="Asp_carbamoyltransf_Asp/Orn-bd"/>
</dbReference>
<dbReference type="InterPro" id="IPR002292">
    <property type="entry name" value="Orn/put_carbamltrans"/>
</dbReference>
<dbReference type="InterPro" id="IPR024904">
    <property type="entry name" value="OTCase_ArgI"/>
</dbReference>
<dbReference type="NCBIfam" id="TIGR00658">
    <property type="entry name" value="orni_carb_tr"/>
    <property type="match status" value="1"/>
</dbReference>
<dbReference type="NCBIfam" id="NF009213">
    <property type="entry name" value="PRK12562.1"/>
    <property type="match status" value="1"/>
</dbReference>
<dbReference type="PANTHER" id="PTHR45753:SF4">
    <property type="entry name" value="ORNITHINE CARBAMOYLTRANSFERASE SUBUNIT F-RELATED"/>
    <property type="match status" value="1"/>
</dbReference>
<dbReference type="PANTHER" id="PTHR45753">
    <property type="entry name" value="ORNITHINE CARBAMOYLTRANSFERASE, MITOCHONDRIAL"/>
    <property type="match status" value="1"/>
</dbReference>
<dbReference type="Pfam" id="PF00185">
    <property type="entry name" value="OTCace"/>
    <property type="match status" value="1"/>
</dbReference>
<dbReference type="Pfam" id="PF02729">
    <property type="entry name" value="OTCace_N"/>
    <property type="match status" value="1"/>
</dbReference>
<dbReference type="PRINTS" id="PR00100">
    <property type="entry name" value="AOTCASE"/>
</dbReference>
<dbReference type="PRINTS" id="PR00102">
    <property type="entry name" value="OTCASE"/>
</dbReference>
<dbReference type="SUPFAM" id="SSF53671">
    <property type="entry name" value="Aspartate/ornithine carbamoyltransferase"/>
    <property type="match status" value="1"/>
</dbReference>
<dbReference type="PROSITE" id="PS00097">
    <property type="entry name" value="CARBAMOYLTRANSFERASE"/>
    <property type="match status" value="1"/>
</dbReference>
<feature type="chain" id="PRO_1000137096" description="Ornithine carbamoyltransferase">
    <location>
        <begin position="1"/>
        <end position="336"/>
    </location>
</feature>
<feature type="binding site" evidence="2">
    <location>
        <begin position="56"/>
        <end position="59"/>
    </location>
    <ligand>
        <name>carbamoyl phosphate</name>
        <dbReference type="ChEBI" id="CHEBI:58228"/>
    </ligand>
</feature>
<feature type="binding site" evidence="2">
    <location>
        <position position="83"/>
    </location>
    <ligand>
        <name>carbamoyl phosphate</name>
        <dbReference type="ChEBI" id="CHEBI:58228"/>
    </ligand>
</feature>
<feature type="binding site" evidence="2">
    <location>
        <position position="107"/>
    </location>
    <ligand>
        <name>carbamoyl phosphate</name>
        <dbReference type="ChEBI" id="CHEBI:58228"/>
    </ligand>
</feature>
<feature type="binding site" evidence="2">
    <location>
        <begin position="134"/>
        <end position="137"/>
    </location>
    <ligand>
        <name>carbamoyl phosphate</name>
        <dbReference type="ChEBI" id="CHEBI:58228"/>
    </ligand>
</feature>
<feature type="binding site" evidence="2">
    <location>
        <position position="168"/>
    </location>
    <ligand>
        <name>L-ornithine</name>
        <dbReference type="ChEBI" id="CHEBI:46911"/>
    </ligand>
</feature>
<feature type="binding site" evidence="2">
    <location>
        <position position="232"/>
    </location>
    <ligand>
        <name>L-ornithine</name>
        <dbReference type="ChEBI" id="CHEBI:46911"/>
    </ligand>
</feature>
<feature type="binding site" evidence="2">
    <location>
        <begin position="236"/>
        <end position="237"/>
    </location>
    <ligand>
        <name>L-ornithine</name>
        <dbReference type="ChEBI" id="CHEBI:46911"/>
    </ligand>
</feature>
<feature type="binding site" evidence="2">
    <location>
        <begin position="274"/>
        <end position="275"/>
    </location>
    <ligand>
        <name>carbamoyl phosphate</name>
        <dbReference type="ChEBI" id="CHEBI:58228"/>
    </ligand>
</feature>
<feature type="binding site" evidence="2">
    <location>
        <position position="320"/>
    </location>
    <ligand>
        <name>carbamoyl phosphate</name>
        <dbReference type="ChEBI" id="CHEBI:58228"/>
    </ligand>
</feature>
<proteinExistence type="inferred from homology"/>
<name>OTC_ERWT9</name>